<accession>P05478</accession>
<proteinExistence type="inferred from homology"/>
<organism>
    <name type="scientific">Glycine max</name>
    <name type="common">Soybean</name>
    <name type="synonym">Glycine hispida</name>
    <dbReference type="NCBI Taxonomy" id="3847"/>
    <lineage>
        <taxon>Eukaryota</taxon>
        <taxon>Viridiplantae</taxon>
        <taxon>Streptophyta</taxon>
        <taxon>Embryophyta</taxon>
        <taxon>Tracheophyta</taxon>
        <taxon>Spermatophyta</taxon>
        <taxon>Magnoliopsida</taxon>
        <taxon>eudicotyledons</taxon>
        <taxon>Gunneridae</taxon>
        <taxon>Pentapetalae</taxon>
        <taxon>rosids</taxon>
        <taxon>fabids</taxon>
        <taxon>Fabales</taxon>
        <taxon>Fabaceae</taxon>
        <taxon>Papilionoideae</taxon>
        <taxon>50 kb inversion clade</taxon>
        <taxon>NPAAA clade</taxon>
        <taxon>indigoferoid/millettioid clade</taxon>
        <taxon>Phaseoleae</taxon>
        <taxon>Glycine</taxon>
        <taxon>Glycine subgen. Soja</taxon>
    </lineage>
</organism>
<dbReference type="EMBL" id="X07160">
    <property type="protein sequence ID" value="CAA30154.1"/>
    <property type="molecule type" value="Genomic_DNA"/>
</dbReference>
<dbReference type="PIR" id="S00646">
    <property type="entry name" value="S00646"/>
</dbReference>
<dbReference type="RefSeq" id="NP_001235177.1">
    <property type="nucleotide sequence ID" value="NM_001248248.2"/>
</dbReference>
<dbReference type="SMR" id="P05478"/>
<dbReference type="FunCoup" id="P05478">
    <property type="interactions" value="335"/>
</dbReference>
<dbReference type="PaxDb" id="3847-GLYMA07G32050.1"/>
<dbReference type="GeneID" id="100499727"/>
<dbReference type="KEGG" id="gmx:100499727"/>
<dbReference type="eggNOG" id="KOG0710">
    <property type="taxonomic scope" value="Eukaryota"/>
</dbReference>
<dbReference type="HOGENOM" id="CLU_046737_5_0_1"/>
<dbReference type="InParanoid" id="P05478"/>
<dbReference type="OrthoDB" id="5511210at2759"/>
<dbReference type="Proteomes" id="UP000008827">
    <property type="component" value="Unplaced"/>
</dbReference>
<dbReference type="GO" id="GO:0005737">
    <property type="term" value="C:cytoplasm"/>
    <property type="evidence" value="ECO:0007669"/>
    <property type="project" value="UniProtKB-SubCell"/>
</dbReference>
<dbReference type="GO" id="GO:0051082">
    <property type="term" value="F:unfolded protein binding"/>
    <property type="evidence" value="ECO:0000318"/>
    <property type="project" value="GO_Central"/>
</dbReference>
<dbReference type="GO" id="GO:0051259">
    <property type="term" value="P:protein complex oligomerization"/>
    <property type="evidence" value="ECO:0000318"/>
    <property type="project" value="GO_Central"/>
</dbReference>
<dbReference type="GO" id="GO:0006457">
    <property type="term" value="P:protein folding"/>
    <property type="evidence" value="ECO:0000318"/>
    <property type="project" value="GO_Central"/>
</dbReference>
<dbReference type="GO" id="GO:0009408">
    <property type="term" value="P:response to heat"/>
    <property type="evidence" value="ECO:0000318"/>
    <property type="project" value="GO_Central"/>
</dbReference>
<dbReference type="GO" id="GO:0042542">
    <property type="term" value="P:response to hydrogen peroxide"/>
    <property type="evidence" value="ECO:0000318"/>
    <property type="project" value="GO_Central"/>
</dbReference>
<dbReference type="GO" id="GO:0009651">
    <property type="term" value="P:response to salt stress"/>
    <property type="evidence" value="ECO:0000318"/>
    <property type="project" value="GO_Central"/>
</dbReference>
<dbReference type="CDD" id="cd06472">
    <property type="entry name" value="ACD_ScHsp26_like"/>
    <property type="match status" value="1"/>
</dbReference>
<dbReference type="FunFam" id="2.60.40.790:FF:000009">
    <property type="entry name" value="17.6 kDa class I heat shock protein-like"/>
    <property type="match status" value="1"/>
</dbReference>
<dbReference type="Gene3D" id="2.60.40.790">
    <property type="match status" value="1"/>
</dbReference>
<dbReference type="InterPro" id="IPR002068">
    <property type="entry name" value="A-crystallin/Hsp20_dom"/>
</dbReference>
<dbReference type="InterPro" id="IPR008978">
    <property type="entry name" value="HSP20-like_chaperone"/>
</dbReference>
<dbReference type="InterPro" id="IPR031107">
    <property type="entry name" value="Small_HSP"/>
</dbReference>
<dbReference type="PANTHER" id="PTHR11527">
    <property type="entry name" value="HEAT-SHOCK PROTEIN 20 FAMILY MEMBER"/>
    <property type="match status" value="1"/>
</dbReference>
<dbReference type="Pfam" id="PF00011">
    <property type="entry name" value="HSP20"/>
    <property type="match status" value="1"/>
</dbReference>
<dbReference type="SUPFAM" id="SSF49764">
    <property type="entry name" value="HSP20-like chaperones"/>
    <property type="match status" value="1"/>
</dbReference>
<dbReference type="PROSITE" id="PS01031">
    <property type="entry name" value="SHSP"/>
    <property type="match status" value="1"/>
</dbReference>
<sequence length="161" mass="18503">MSLIPNFFGGRRNNVFDPFSLDVWDPFKDFPFPNTLSSASFPEFSRENSAFVSTRVDWKETPEAHVFKADIPGLKKEEVKVQIEDDKVLQISGERNVEKEDKNDTWHRVERSSGKFMRRFRLPENAKVEQVKASMENGVLTVTVPKEEVKKPDVKAIEISG</sequence>
<comment type="subunit">
    <text>Forms oligomeric structures.</text>
</comment>
<comment type="subcellular location">
    <subcellularLocation>
        <location>Cytoplasm</location>
    </subcellularLocation>
</comment>
<comment type="similarity">
    <text evidence="1">Belongs to the small heat shock protein (HSP20) family.</text>
</comment>
<feature type="chain" id="PRO_0000125989" description="18.5 kDa class I heat shock protein">
    <location>
        <begin position="1"/>
        <end position="161"/>
    </location>
</feature>
<feature type="domain" description="sHSP" evidence="1">
    <location>
        <begin position="47"/>
        <end position="161"/>
    </location>
</feature>
<name>HSP16_SOYBN</name>
<protein>
    <recommendedName>
        <fullName>18.5 kDa class I heat shock protein</fullName>
    </recommendedName>
    <alternativeName>
        <fullName>HSP 18.5</fullName>
    </alternativeName>
</protein>
<evidence type="ECO:0000255" key="1">
    <source>
        <dbReference type="PROSITE-ProRule" id="PRU00285"/>
    </source>
</evidence>
<keyword id="KW-0963">Cytoplasm</keyword>
<keyword id="KW-1185">Reference proteome</keyword>
<keyword id="KW-0346">Stress response</keyword>
<reference key="1">
    <citation type="journal article" date="1988" name="J. Mol. Biol.">
        <title>Nucleotide sequence analysis of soybean small heat shock protein genes belonging to two different multigene families.</title>
        <authorList>
            <person name="Raschke E."/>
            <person name="Baumann G."/>
            <person name="Schoeffl F."/>
        </authorList>
    </citation>
    <scope>NUCLEOTIDE SEQUENCE [GENOMIC DNA]</scope>
    <source>
        <strain>cv. Corsoy</strain>
    </source>
</reference>
<gene>
    <name type="primary">HSP18.5-C</name>
</gene>